<protein>
    <recommendedName>
        <fullName evidence="1">Xylose isomerase</fullName>
        <ecNumber evidence="1">5.3.1.5</ecNumber>
    </recommendedName>
</protein>
<organism>
    <name type="scientific">Sinorhizobium fredii (strain NBRC 101917 / NGR234)</name>
    <dbReference type="NCBI Taxonomy" id="394"/>
    <lineage>
        <taxon>Bacteria</taxon>
        <taxon>Pseudomonadati</taxon>
        <taxon>Pseudomonadota</taxon>
        <taxon>Alphaproteobacteria</taxon>
        <taxon>Hyphomicrobiales</taxon>
        <taxon>Rhizobiaceae</taxon>
        <taxon>Sinorhizobium/Ensifer group</taxon>
        <taxon>Sinorhizobium</taxon>
    </lineage>
</organism>
<proteinExistence type="inferred from homology"/>
<gene>
    <name evidence="1" type="primary">xylA</name>
    <name type="ordered locus">NGR_c29480</name>
</gene>
<comment type="catalytic activity">
    <reaction evidence="1">
        <text>alpha-D-xylose = alpha-D-xylulofuranose</text>
        <dbReference type="Rhea" id="RHEA:22816"/>
        <dbReference type="ChEBI" id="CHEBI:28518"/>
        <dbReference type="ChEBI" id="CHEBI:188998"/>
        <dbReference type="EC" id="5.3.1.5"/>
    </reaction>
</comment>
<comment type="cofactor">
    <cofactor evidence="1">
        <name>Mg(2+)</name>
        <dbReference type="ChEBI" id="CHEBI:18420"/>
    </cofactor>
    <text evidence="1">Binds 2 magnesium ions per subunit.</text>
</comment>
<comment type="subunit">
    <text evidence="1">Homotetramer.</text>
</comment>
<comment type="subcellular location">
    <subcellularLocation>
        <location evidence="1">Cytoplasm</location>
    </subcellularLocation>
</comment>
<comment type="similarity">
    <text evidence="1">Belongs to the xylose isomerase family.</text>
</comment>
<feature type="chain" id="PRO_1000200301" description="Xylose isomerase">
    <location>
        <begin position="1"/>
        <end position="436"/>
    </location>
</feature>
<feature type="binding site" evidence="1">
    <location>
        <position position="306"/>
    </location>
    <ligand>
        <name>Mg(2+)</name>
        <dbReference type="ChEBI" id="CHEBI:18420"/>
        <label>2</label>
    </ligand>
</feature>
<feature type="binding site" evidence="1">
    <location>
        <position position="308"/>
    </location>
    <ligand>
        <name>Mg(2+)</name>
        <dbReference type="ChEBI" id="CHEBI:18420"/>
        <label>2</label>
    </ligand>
</feature>
<evidence type="ECO:0000255" key="1">
    <source>
        <dbReference type="HAMAP-Rule" id="MF_00455"/>
    </source>
</evidence>
<name>XYLA_SINFN</name>
<accession>C3M8Y0</accession>
<sequence length="436" mass="48852">MSTGFFGDIAKIKYEGPESTNPLAFRHYNPDEIVLGKRMEDHLRFAVAYWHTFVWPGGDPFGGQTFERPWFKDTMDAAKLKADVAFEFFQLLGVPFYCFHDADVRPEGRNFAENTSNLNEIVDHFAEKQAATGVKLLWGTANLFSNRRYMGGAATNPDPDVFAFAAATVKTCIDATQRLGGENYVLWGGREGYETLLNTDLKRELDQLGRFVNLVVEYKHKIGFKGAILIEPKPQEPTKHQYDFDVATVYGFLKKYGLENEVKVNIEQGHAILAGHSFEHELALANALGIFGSIDMNRNDYQSGWDTDQFPNNVPEMALAYHHVLSGGGFKTGGTNFDAKLRRQSIDPEDLLIGHIGGMDCCARGLKAAAKMVEDKALSGPLEKRYAGWNVPEAKKMLDGGFSLDEIEAWVRKADLNPQPKSGRQEYLENVVNRYV</sequence>
<dbReference type="EC" id="5.3.1.5" evidence="1"/>
<dbReference type="EMBL" id="CP001389">
    <property type="protein sequence ID" value="ACP26691.1"/>
    <property type="molecule type" value="Genomic_DNA"/>
</dbReference>
<dbReference type="RefSeq" id="WP_012709445.1">
    <property type="nucleotide sequence ID" value="NC_012587.1"/>
</dbReference>
<dbReference type="RefSeq" id="YP_002827444.1">
    <property type="nucleotide sequence ID" value="NC_012587.1"/>
</dbReference>
<dbReference type="SMR" id="C3M8Y0"/>
<dbReference type="STRING" id="394.NGR_c29480"/>
<dbReference type="KEGG" id="rhi:NGR_c29480"/>
<dbReference type="PATRIC" id="fig|394.7.peg.5786"/>
<dbReference type="eggNOG" id="COG2115">
    <property type="taxonomic scope" value="Bacteria"/>
</dbReference>
<dbReference type="HOGENOM" id="CLU_037261_1_0_5"/>
<dbReference type="OrthoDB" id="9763981at2"/>
<dbReference type="Proteomes" id="UP000001054">
    <property type="component" value="Chromosome"/>
</dbReference>
<dbReference type="GO" id="GO:0005737">
    <property type="term" value="C:cytoplasm"/>
    <property type="evidence" value="ECO:0007669"/>
    <property type="project" value="UniProtKB-SubCell"/>
</dbReference>
<dbReference type="GO" id="GO:0000287">
    <property type="term" value="F:magnesium ion binding"/>
    <property type="evidence" value="ECO:0007669"/>
    <property type="project" value="UniProtKB-UniRule"/>
</dbReference>
<dbReference type="GO" id="GO:0009045">
    <property type="term" value="F:xylose isomerase activity"/>
    <property type="evidence" value="ECO:0007669"/>
    <property type="project" value="UniProtKB-UniRule"/>
</dbReference>
<dbReference type="GO" id="GO:0042732">
    <property type="term" value="P:D-xylose metabolic process"/>
    <property type="evidence" value="ECO:0007669"/>
    <property type="project" value="UniProtKB-UniRule"/>
</dbReference>
<dbReference type="FunFam" id="3.20.20.150:FF:000002">
    <property type="entry name" value="Xylose isomerase"/>
    <property type="match status" value="1"/>
</dbReference>
<dbReference type="Gene3D" id="3.20.20.150">
    <property type="entry name" value="Divalent-metal-dependent TIM barrel enzymes"/>
    <property type="match status" value="1"/>
</dbReference>
<dbReference type="HAMAP" id="MF_00455">
    <property type="entry name" value="Xylose_isom_A"/>
    <property type="match status" value="1"/>
</dbReference>
<dbReference type="InterPro" id="IPR036237">
    <property type="entry name" value="Xyl_isomerase-like_sf"/>
</dbReference>
<dbReference type="InterPro" id="IPR013452">
    <property type="entry name" value="Xylose_isom_bac"/>
</dbReference>
<dbReference type="InterPro" id="IPR001998">
    <property type="entry name" value="Xylose_isomerase"/>
</dbReference>
<dbReference type="NCBIfam" id="NF003998">
    <property type="entry name" value="PRK05474.1"/>
    <property type="match status" value="1"/>
</dbReference>
<dbReference type="NCBIfam" id="TIGR02630">
    <property type="entry name" value="xylose_isom_A"/>
    <property type="match status" value="1"/>
</dbReference>
<dbReference type="PANTHER" id="PTHR48408">
    <property type="match status" value="1"/>
</dbReference>
<dbReference type="PANTHER" id="PTHR48408:SF1">
    <property type="entry name" value="XYLOSE ISOMERASE"/>
    <property type="match status" value="1"/>
</dbReference>
<dbReference type="PRINTS" id="PR00688">
    <property type="entry name" value="XYLOSISMRASE"/>
</dbReference>
<dbReference type="SUPFAM" id="SSF51658">
    <property type="entry name" value="Xylose isomerase-like"/>
    <property type="match status" value="1"/>
</dbReference>
<dbReference type="PROSITE" id="PS51415">
    <property type="entry name" value="XYLOSE_ISOMERASE"/>
    <property type="match status" value="1"/>
</dbReference>
<keyword id="KW-0119">Carbohydrate metabolism</keyword>
<keyword id="KW-0963">Cytoplasm</keyword>
<keyword id="KW-0413">Isomerase</keyword>
<keyword id="KW-0460">Magnesium</keyword>
<keyword id="KW-0479">Metal-binding</keyword>
<keyword id="KW-1185">Reference proteome</keyword>
<keyword id="KW-0859">Xylose metabolism</keyword>
<reference key="1">
    <citation type="journal article" date="2009" name="Appl. Environ. Microbiol.">
        <title>Rhizobium sp. strain NGR234 possesses a remarkable number of secretion systems.</title>
        <authorList>
            <person name="Schmeisser C."/>
            <person name="Liesegang H."/>
            <person name="Krysciak D."/>
            <person name="Bakkou N."/>
            <person name="Le Quere A."/>
            <person name="Wollherr A."/>
            <person name="Heinemeyer I."/>
            <person name="Morgenstern B."/>
            <person name="Pommerening-Roeser A."/>
            <person name="Flores M."/>
            <person name="Palacios R."/>
            <person name="Brenner S."/>
            <person name="Gottschalk G."/>
            <person name="Schmitz R.A."/>
            <person name="Broughton W.J."/>
            <person name="Perret X."/>
            <person name="Strittmatter A.W."/>
            <person name="Streit W.R."/>
        </authorList>
    </citation>
    <scope>NUCLEOTIDE SEQUENCE [LARGE SCALE GENOMIC DNA]</scope>
    <source>
        <strain>NBRC 101917 / NGR234</strain>
    </source>
</reference>